<proteinExistence type="inferred from homology"/>
<feature type="chain" id="PRO_0000101512" description="Ribosomal RNA small subunit methyltransferase A">
    <location>
        <begin position="1"/>
        <end position="275"/>
    </location>
</feature>
<feature type="binding site" evidence="1">
    <location>
        <position position="20"/>
    </location>
    <ligand>
        <name>S-adenosyl-L-methionine</name>
        <dbReference type="ChEBI" id="CHEBI:59789"/>
    </ligand>
</feature>
<feature type="binding site" evidence="1">
    <location>
        <position position="22"/>
    </location>
    <ligand>
        <name>S-adenosyl-L-methionine</name>
        <dbReference type="ChEBI" id="CHEBI:59789"/>
    </ligand>
</feature>
<feature type="binding site" evidence="1">
    <location>
        <position position="47"/>
    </location>
    <ligand>
        <name>S-adenosyl-L-methionine</name>
        <dbReference type="ChEBI" id="CHEBI:59789"/>
    </ligand>
</feature>
<feature type="binding site" evidence="1">
    <location>
        <position position="68"/>
    </location>
    <ligand>
        <name>S-adenosyl-L-methionine</name>
        <dbReference type="ChEBI" id="CHEBI:59789"/>
    </ligand>
</feature>
<feature type="binding site" evidence="1">
    <location>
        <position position="90"/>
    </location>
    <ligand>
        <name>S-adenosyl-L-methionine</name>
        <dbReference type="ChEBI" id="CHEBI:59789"/>
    </ligand>
</feature>
<feature type="binding site" evidence="1">
    <location>
        <position position="110"/>
    </location>
    <ligand>
        <name>S-adenosyl-L-methionine</name>
        <dbReference type="ChEBI" id="CHEBI:59789"/>
    </ligand>
</feature>
<name>RSMA_CHLTE</name>
<sequence>MTKVEYKHTHIAAKKKLGQNFLLDRNIPRKIVRESGIKEGDRVVEIGPGFGALTTAILEVMPSFTAIEKDRELAKFNREEHPQIELIEDDFLKVPLEPLAAGGKLSVLGNIPYSITSPILFRLLDNRHLIASATLMIQHEVAQRIAAVPGTKEYGILAVQMQAFCDVKYLFKVGRAVFKPRPDVDSAVIKMVPKAVDPVKDSEGFRTFVRRVFHQRRKTLLNNLKEYYDTSGVPEPTLKLRAESLSVPALITLFTQLKLIARGDASGQLLLKRRR</sequence>
<gene>
    <name evidence="1" type="primary">rsmA</name>
    <name evidence="1" type="synonym">ksgA</name>
    <name type="ordered locus">CT0803</name>
</gene>
<keyword id="KW-0963">Cytoplasm</keyword>
<keyword id="KW-0489">Methyltransferase</keyword>
<keyword id="KW-1185">Reference proteome</keyword>
<keyword id="KW-0694">RNA-binding</keyword>
<keyword id="KW-0698">rRNA processing</keyword>
<keyword id="KW-0949">S-adenosyl-L-methionine</keyword>
<keyword id="KW-0808">Transferase</keyword>
<accession>Q8KE87</accession>
<protein>
    <recommendedName>
        <fullName evidence="1">Ribosomal RNA small subunit methyltransferase A</fullName>
        <ecNumber evidence="1">2.1.1.182</ecNumber>
    </recommendedName>
    <alternativeName>
        <fullName evidence="1">16S rRNA (adenine(1518)-N(6)/adenine(1519)-N(6))-dimethyltransferase</fullName>
    </alternativeName>
    <alternativeName>
        <fullName evidence="1">16S rRNA dimethyladenosine transferase</fullName>
    </alternativeName>
    <alternativeName>
        <fullName evidence="1">16S rRNA dimethylase</fullName>
    </alternativeName>
    <alternativeName>
        <fullName evidence="1">S-adenosylmethionine-6-N', N'-adenosyl(rRNA) dimethyltransferase</fullName>
    </alternativeName>
</protein>
<dbReference type="EC" id="2.1.1.182" evidence="1"/>
<dbReference type="EMBL" id="AE006470">
    <property type="protein sequence ID" value="AAM72039.1"/>
    <property type="molecule type" value="Genomic_DNA"/>
</dbReference>
<dbReference type="RefSeq" id="NP_661697.1">
    <property type="nucleotide sequence ID" value="NC_002932.3"/>
</dbReference>
<dbReference type="RefSeq" id="WP_010932484.1">
    <property type="nucleotide sequence ID" value="NC_002932.3"/>
</dbReference>
<dbReference type="SMR" id="Q8KE87"/>
<dbReference type="STRING" id="194439.CT0803"/>
<dbReference type="EnsemblBacteria" id="AAM72039">
    <property type="protein sequence ID" value="AAM72039"/>
    <property type="gene ID" value="CT0803"/>
</dbReference>
<dbReference type="KEGG" id="cte:CT0803"/>
<dbReference type="PATRIC" id="fig|194439.7.peg.728"/>
<dbReference type="eggNOG" id="COG0030">
    <property type="taxonomic scope" value="Bacteria"/>
</dbReference>
<dbReference type="HOGENOM" id="CLU_041220_0_1_10"/>
<dbReference type="OrthoDB" id="9814755at2"/>
<dbReference type="Proteomes" id="UP000001007">
    <property type="component" value="Chromosome"/>
</dbReference>
<dbReference type="GO" id="GO:0005829">
    <property type="term" value="C:cytosol"/>
    <property type="evidence" value="ECO:0007669"/>
    <property type="project" value="TreeGrafter"/>
</dbReference>
<dbReference type="GO" id="GO:0052908">
    <property type="term" value="F:16S rRNA (adenine(1518)-N(6)/adenine(1519)-N(6))-dimethyltransferase activity"/>
    <property type="evidence" value="ECO:0007669"/>
    <property type="project" value="UniProtKB-EC"/>
</dbReference>
<dbReference type="GO" id="GO:0003723">
    <property type="term" value="F:RNA binding"/>
    <property type="evidence" value="ECO:0007669"/>
    <property type="project" value="UniProtKB-KW"/>
</dbReference>
<dbReference type="CDD" id="cd02440">
    <property type="entry name" value="AdoMet_MTases"/>
    <property type="match status" value="1"/>
</dbReference>
<dbReference type="Gene3D" id="1.10.8.100">
    <property type="entry name" value="Ribosomal RNA adenine dimethylase-like, domain 2"/>
    <property type="match status" value="1"/>
</dbReference>
<dbReference type="Gene3D" id="3.40.50.150">
    <property type="entry name" value="Vaccinia Virus protein VP39"/>
    <property type="match status" value="1"/>
</dbReference>
<dbReference type="HAMAP" id="MF_00607">
    <property type="entry name" value="16SrRNA_methyltr_A"/>
    <property type="match status" value="1"/>
</dbReference>
<dbReference type="InterPro" id="IPR001737">
    <property type="entry name" value="KsgA/Erm"/>
</dbReference>
<dbReference type="InterPro" id="IPR023165">
    <property type="entry name" value="rRNA_Ade_diMease-like_C"/>
</dbReference>
<dbReference type="InterPro" id="IPR020596">
    <property type="entry name" value="rRNA_Ade_Mease_Trfase_CS"/>
</dbReference>
<dbReference type="InterPro" id="IPR020598">
    <property type="entry name" value="rRNA_Ade_methylase_Trfase_N"/>
</dbReference>
<dbReference type="InterPro" id="IPR011530">
    <property type="entry name" value="rRNA_adenine_dimethylase"/>
</dbReference>
<dbReference type="InterPro" id="IPR029063">
    <property type="entry name" value="SAM-dependent_MTases_sf"/>
</dbReference>
<dbReference type="NCBIfam" id="TIGR00755">
    <property type="entry name" value="ksgA"/>
    <property type="match status" value="1"/>
</dbReference>
<dbReference type="PANTHER" id="PTHR11727">
    <property type="entry name" value="DIMETHYLADENOSINE TRANSFERASE"/>
    <property type="match status" value="1"/>
</dbReference>
<dbReference type="PANTHER" id="PTHR11727:SF7">
    <property type="entry name" value="DIMETHYLADENOSINE TRANSFERASE-RELATED"/>
    <property type="match status" value="1"/>
</dbReference>
<dbReference type="Pfam" id="PF00398">
    <property type="entry name" value="RrnaAD"/>
    <property type="match status" value="1"/>
</dbReference>
<dbReference type="SMART" id="SM00650">
    <property type="entry name" value="rADc"/>
    <property type="match status" value="1"/>
</dbReference>
<dbReference type="SUPFAM" id="SSF53335">
    <property type="entry name" value="S-adenosyl-L-methionine-dependent methyltransferases"/>
    <property type="match status" value="1"/>
</dbReference>
<dbReference type="PROSITE" id="PS01131">
    <property type="entry name" value="RRNA_A_DIMETH"/>
    <property type="match status" value="1"/>
</dbReference>
<dbReference type="PROSITE" id="PS51689">
    <property type="entry name" value="SAM_RNA_A_N6_MT"/>
    <property type="match status" value="1"/>
</dbReference>
<comment type="function">
    <text evidence="1">Specifically dimethylates two adjacent adenosines (A1518 and A1519) in the loop of a conserved hairpin near the 3'-end of 16S rRNA in the 30S particle. May play a critical role in biogenesis of 30S subunits.</text>
</comment>
<comment type="catalytic activity">
    <reaction evidence="1">
        <text>adenosine(1518)/adenosine(1519) in 16S rRNA + 4 S-adenosyl-L-methionine = N(6)-dimethyladenosine(1518)/N(6)-dimethyladenosine(1519) in 16S rRNA + 4 S-adenosyl-L-homocysteine + 4 H(+)</text>
        <dbReference type="Rhea" id="RHEA:19609"/>
        <dbReference type="Rhea" id="RHEA-COMP:10232"/>
        <dbReference type="Rhea" id="RHEA-COMP:10233"/>
        <dbReference type="ChEBI" id="CHEBI:15378"/>
        <dbReference type="ChEBI" id="CHEBI:57856"/>
        <dbReference type="ChEBI" id="CHEBI:59789"/>
        <dbReference type="ChEBI" id="CHEBI:74411"/>
        <dbReference type="ChEBI" id="CHEBI:74493"/>
        <dbReference type="EC" id="2.1.1.182"/>
    </reaction>
</comment>
<comment type="subcellular location">
    <subcellularLocation>
        <location evidence="1">Cytoplasm</location>
    </subcellularLocation>
</comment>
<comment type="similarity">
    <text evidence="1">Belongs to the class I-like SAM-binding methyltransferase superfamily. rRNA adenine N(6)-methyltransferase family. RsmA subfamily.</text>
</comment>
<evidence type="ECO:0000255" key="1">
    <source>
        <dbReference type="HAMAP-Rule" id="MF_00607"/>
    </source>
</evidence>
<reference key="1">
    <citation type="journal article" date="2002" name="Proc. Natl. Acad. Sci. U.S.A.">
        <title>The complete genome sequence of Chlorobium tepidum TLS, a photosynthetic, anaerobic, green-sulfur bacterium.</title>
        <authorList>
            <person name="Eisen J.A."/>
            <person name="Nelson K.E."/>
            <person name="Paulsen I.T."/>
            <person name="Heidelberg J.F."/>
            <person name="Wu M."/>
            <person name="Dodson R.J."/>
            <person name="DeBoy R.T."/>
            <person name="Gwinn M.L."/>
            <person name="Nelson W.C."/>
            <person name="Haft D.H."/>
            <person name="Hickey E.K."/>
            <person name="Peterson J.D."/>
            <person name="Durkin A.S."/>
            <person name="Kolonay J.F."/>
            <person name="Yang F."/>
            <person name="Holt I.E."/>
            <person name="Umayam L.A."/>
            <person name="Mason T.M."/>
            <person name="Brenner M."/>
            <person name="Shea T.P."/>
            <person name="Parksey D.S."/>
            <person name="Nierman W.C."/>
            <person name="Feldblyum T.V."/>
            <person name="Hansen C.L."/>
            <person name="Craven M.B."/>
            <person name="Radune D."/>
            <person name="Vamathevan J.J."/>
            <person name="Khouri H.M."/>
            <person name="White O."/>
            <person name="Gruber T.M."/>
            <person name="Ketchum K.A."/>
            <person name="Venter J.C."/>
            <person name="Tettelin H."/>
            <person name="Bryant D.A."/>
            <person name="Fraser C.M."/>
        </authorList>
    </citation>
    <scope>NUCLEOTIDE SEQUENCE [LARGE SCALE GENOMIC DNA]</scope>
    <source>
        <strain>ATCC 49652 / DSM 12025 / NBRC 103806 / TLS</strain>
    </source>
</reference>
<organism>
    <name type="scientific">Chlorobaculum tepidum (strain ATCC 49652 / DSM 12025 / NBRC 103806 / TLS)</name>
    <name type="common">Chlorobium tepidum</name>
    <dbReference type="NCBI Taxonomy" id="194439"/>
    <lineage>
        <taxon>Bacteria</taxon>
        <taxon>Pseudomonadati</taxon>
        <taxon>Chlorobiota</taxon>
        <taxon>Chlorobiia</taxon>
        <taxon>Chlorobiales</taxon>
        <taxon>Chlorobiaceae</taxon>
        <taxon>Chlorobaculum</taxon>
    </lineage>
</organism>